<comment type="function">
    <text evidence="1">Located at the top of the head of the 30S subunit, it contacts several helices of the 16S rRNA. In the 70S ribosome it contacts the 23S rRNA (bridge B1a) and protein L5 of the 50S subunit (bridge B1b), connecting the 2 subunits; these bridges are implicated in subunit movement. Contacts the tRNAs in the A and P-sites.</text>
</comment>
<comment type="subunit">
    <text evidence="1">Part of the 30S ribosomal subunit. Forms a loose heterodimer with protein S19. Forms two bridges to the 50S subunit in the 70S ribosome.</text>
</comment>
<comment type="similarity">
    <text evidence="1">Belongs to the universal ribosomal protein uS13 family.</text>
</comment>
<organism>
    <name type="scientific">Streptococcus sanguinis (strain SK36)</name>
    <dbReference type="NCBI Taxonomy" id="388919"/>
    <lineage>
        <taxon>Bacteria</taxon>
        <taxon>Bacillati</taxon>
        <taxon>Bacillota</taxon>
        <taxon>Bacilli</taxon>
        <taxon>Lactobacillales</taxon>
        <taxon>Streptococcaceae</taxon>
        <taxon>Streptococcus</taxon>
    </lineage>
</organism>
<accession>A3CK88</accession>
<reference key="1">
    <citation type="journal article" date="2007" name="J. Bacteriol.">
        <title>Genome of the opportunistic pathogen Streptococcus sanguinis.</title>
        <authorList>
            <person name="Xu P."/>
            <person name="Alves J.M."/>
            <person name="Kitten T."/>
            <person name="Brown A."/>
            <person name="Chen Z."/>
            <person name="Ozaki L.S."/>
            <person name="Manque P."/>
            <person name="Ge X."/>
            <person name="Serrano M.G."/>
            <person name="Puiu D."/>
            <person name="Hendricks S."/>
            <person name="Wang Y."/>
            <person name="Chaplin M.D."/>
            <person name="Akan D."/>
            <person name="Paik S."/>
            <person name="Peterson D.L."/>
            <person name="Macrina F.L."/>
            <person name="Buck G.A."/>
        </authorList>
    </citation>
    <scope>NUCLEOTIDE SEQUENCE [LARGE SCALE GENOMIC DNA]</scope>
    <source>
        <strain>SK36</strain>
    </source>
</reference>
<feature type="chain" id="PRO_0000306723" description="Small ribosomal subunit protein uS13">
    <location>
        <begin position="1"/>
        <end position="121"/>
    </location>
</feature>
<feature type="region of interest" description="Disordered" evidence="2">
    <location>
        <begin position="94"/>
        <end position="121"/>
    </location>
</feature>
<feature type="compositionally biased region" description="Basic residues" evidence="2">
    <location>
        <begin position="106"/>
        <end position="121"/>
    </location>
</feature>
<proteinExistence type="inferred from homology"/>
<gene>
    <name evidence="1" type="primary">rpsM</name>
    <name type="ordered locus">SSA_0130</name>
</gene>
<dbReference type="EMBL" id="CP000387">
    <property type="protein sequence ID" value="ABN43593.1"/>
    <property type="molecule type" value="Genomic_DNA"/>
</dbReference>
<dbReference type="RefSeq" id="WP_002894516.1">
    <property type="nucleotide sequence ID" value="NZ_CAXTYR010000005.1"/>
</dbReference>
<dbReference type="RefSeq" id="YP_001034143.1">
    <property type="nucleotide sequence ID" value="NC_009009.1"/>
</dbReference>
<dbReference type="SMR" id="A3CK88"/>
<dbReference type="STRING" id="388919.SSA_0130"/>
<dbReference type="GeneID" id="48426561"/>
<dbReference type="KEGG" id="ssa:SSA_0130"/>
<dbReference type="PATRIC" id="fig|388919.9.peg.125"/>
<dbReference type="eggNOG" id="COG0099">
    <property type="taxonomic scope" value="Bacteria"/>
</dbReference>
<dbReference type="HOGENOM" id="CLU_103849_1_1_9"/>
<dbReference type="OrthoDB" id="9803610at2"/>
<dbReference type="Proteomes" id="UP000002148">
    <property type="component" value="Chromosome"/>
</dbReference>
<dbReference type="GO" id="GO:0005829">
    <property type="term" value="C:cytosol"/>
    <property type="evidence" value="ECO:0007669"/>
    <property type="project" value="TreeGrafter"/>
</dbReference>
<dbReference type="GO" id="GO:0015935">
    <property type="term" value="C:small ribosomal subunit"/>
    <property type="evidence" value="ECO:0007669"/>
    <property type="project" value="TreeGrafter"/>
</dbReference>
<dbReference type="GO" id="GO:0019843">
    <property type="term" value="F:rRNA binding"/>
    <property type="evidence" value="ECO:0007669"/>
    <property type="project" value="UniProtKB-UniRule"/>
</dbReference>
<dbReference type="GO" id="GO:0003735">
    <property type="term" value="F:structural constituent of ribosome"/>
    <property type="evidence" value="ECO:0007669"/>
    <property type="project" value="InterPro"/>
</dbReference>
<dbReference type="GO" id="GO:0000049">
    <property type="term" value="F:tRNA binding"/>
    <property type="evidence" value="ECO:0007669"/>
    <property type="project" value="UniProtKB-UniRule"/>
</dbReference>
<dbReference type="GO" id="GO:0006412">
    <property type="term" value="P:translation"/>
    <property type="evidence" value="ECO:0007669"/>
    <property type="project" value="UniProtKB-UniRule"/>
</dbReference>
<dbReference type="FunFam" id="1.10.8.50:FF:000001">
    <property type="entry name" value="30S ribosomal protein S13"/>
    <property type="match status" value="1"/>
</dbReference>
<dbReference type="FunFam" id="4.10.910.10:FF:000001">
    <property type="entry name" value="30S ribosomal protein S13"/>
    <property type="match status" value="1"/>
</dbReference>
<dbReference type="Gene3D" id="1.10.8.50">
    <property type="match status" value="1"/>
</dbReference>
<dbReference type="Gene3D" id="4.10.910.10">
    <property type="entry name" value="30s ribosomal protein s13, domain 2"/>
    <property type="match status" value="1"/>
</dbReference>
<dbReference type="HAMAP" id="MF_01315">
    <property type="entry name" value="Ribosomal_uS13"/>
    <property type="match status" value="1"/>
</dbReference>
<dbReference type="InterPro" id="IPR027437">
    <property type="entry name" value="Rbsml_uS13_C"/>
</dbReference>
<dbReference type="InterPro" id="IPR001892">
    <property type="entry name" value="Ribosomal_uS13"/>
</dbReference>
<dbReference type="InterPro" id="IPR010979">
    <property type="entry name" value="Ribosomal_uS13-like_H2TH"/>
</dbReference>
<dbReference type="InterPro" id="IPR019980">
    <property type="entry name" value="Ribosomal_uS13_bac-type"/>
</dbReference>
<dbReference type="InterPro" id="IPR018269">
    <property type="entry name" value="Ribosomal_uS13_CS"/>
</dbReference>
<dbReference type="NCBIfam" id="TIGR03631">
    <property type="entry name" value="uS13_bact"/>
    <property type="match status" value="1"/>
</dbReference>
<dbReference type="PANTHER" id="PTHR10871">
    <property type="entry name" value="30S RIBOSOMAL PROTEIN S13/40S RIBOSOMAL PROTEIN S18"/>
    <property type="match status" value="1"/>
</dbReference>
<dbReference type="PANTHER" id="PTHR10871:SF1">
    <property type="entry name" value="SMALL RIBOSOMAL SUBUNIT PROTEIN US13M"/>
    <property type="match status" value="1"/>
</dbReference>
<dbReference type="Pfam" id="PF00416">
    <property type="entry name" value="Ribosomal_S13"/>
    <property type="match status" value="1"/>
</dbReference>
<dbReference type="PIRSF" id="PIRSF002134">
    <property type="entry name" value="Ribosomal_S13"/>
    <property type="match status" value="1"/>
</dbReference>
<dbReference type="SUPFAM" id="SSF46946">
    <property type="entry name" value="S13-like H2TH domain"/>
    <property type="match status" value="1"/>
</dbReference>
<dbReference type="PROSITE" id="PS00646">
    <property type="entry name" value="RIBOSOMAL_S13_1"/>
    <property type="match status" value="1"/>
</dbReference>
<dbReference type="PROSITE" id="PS50159">
    <property type="entry name" value="RIBOSOMAL_S13_2"/>
    <property type="match status" value="1"/>
</dbReference>
<name>RS13_STRSV</name>
<sequence>MARIAGVDIPNDKRVVVSLTYVYGIGLPTSKKILAAAGVSEDIRVKDLTIEQEDAIRREVDAIKVEGDLRREVNLNIKRLMEIGSYRGIRHRRGLPVRGQNTKNNARTRKGKAVAIAGKKK</sequence>
<keyword id="KW-1185">Reference proteome</keyword>
<keyword id="KW-0687">Ribonucleoprotein</keyword>
<keyword id="KW-0689">Ribosomal protein</keyword>
<keyword id="KW-0694">RNA-binding</keyword>
<keyword id="KW-0699">rRNA-binding</keyword>
<keyword id="KW-0820">tRNA-binding</keyword>
<evidence type="ECO:0000255" key="1">
    <source>
        <dbReference type="HAMAP-Rule" id="MF_01315"/>
    </source>
</evidence>
<evidence type="ECO:0000256" key="2">
    <source>
        <dbReference type="SAM" id="MobiDB-lite"/>
    </source>
</evidence>
<evidence type="ECO:0000305" key="3"/>
<protein>
    <recommendedName>
        <fullName evidence="1">Small ribosomal subunit protein uS13</fullName>
    </recommendedName>
    <alternativeName>
        <fullName evidence="3">30S ribosomal protein S13</fullName>
    </alternativeName>
</protein>